<proteinExistence type="inferred from homology"/>
<accession>A5WGT5</accession>
<comment type="function">
    <text evidence="1">Catalyzes the isomerization between 2-isopropylmalate and 3-isopropylmalate, via the formation of 2-isopropylmaleate.</text>
</comment>
<comment type="catalytic activity">
    <reaction evidence="1">
        <text>(2R,3S)-3-isopropylmalate = (2S)-2-isopropylmalate</text>
        <dbReference type="Rhea" id="RHEA:32287"/>
        <dbReference type="ChEBI" id="CHEBI:1178"/>
        <dbReference type="ChEBI" id="CHEBI:35121"/>
        <dbReference type="EC" id="4.2.1.33"/>
    </reaction>
</comment>
<comment type="cofactor">
    <cofactor evidence="1">
        <name>[4Fe-4S] cluster</name>
        <dbReference type="ChEBI" id="CHEBI:49883"/>
    </cofactor>
    <text evidence="1">Binds 1 [4Fe-4S] cluster per subunit.</text>
</comment>
<comment type="pathway">
    <text evidence="1">Amino-acid biosynthesis; L-leucine biosynthesis; L-leucine from 3-methyl-2-oxobutanoate: step 2/4.</text>
</comment>
<comment type="subunit">
    <text evidence="1">Heterodimer of LeuC and LeuD.</text>
</comment>
<comment type="similarity">
    <text evidence="1">Belongs to the aconitase/IPM isomerase family. LeuC type 1 subfamily.</text>
</comment>
<keyword id="KW-0004">4Fe-4S</keyword>
<keyword id="KW-0028">Amino-acid biosynthesis</keyword>
<keyword id="KW-0100">Branched-chain amino acid biosynthesis</keyword>
<keyword id="KW-0408">Iron</keyword>
<keyword id="KW-0411">Iron-sulfur</keyword>
<keyword id="KW-0432">Leucine biosynthesis</keyword>
<keyword id="KW-0456">Lyase</keyword>
<keyword id="KW-0479">Metal-binding</keyword>
<organism>
    <name type="scientific">Psychrobacter sp. (strain PRwf-1)</name>
    <dbReference type="NCBI Taxonomy" id="349106"/>
    <lineage>
        <taxon>Bacteria</taxon>
        <taxon>Pseudomonadati</taxon>
        <taxon>Pseudomonadota</taxon>
        <taxon>Gammaproteobacteria</taxon>
        <taxon>Moraxellales</taxon>
        <taxon>Moraxellaceae</taxon>
        <taxon>Psychrobacter</taxon>
    </lineage>
</organism>
<reference key="1">
    <citation type="submission" date="2007-05" db="EMBL/GenBank/DDBJ databases">
        <title>Complete sequence of chromosome of Psychrobacter sp. PRwf-1.</title>
        <authorList>
            <consortium name="US DOE Joint Genome Institute"/>
            <person name="Copeland A."/>
            <person name="Lucas S."/>
            <person name="Lapidus A."/>
            <person name="Barry K."/>
            <person name="Detter J.C."/>
            <person name="Glavina del Rio T."/>
            <person name="Hammon N."/>
            <person name="Israni S."/>
            <person name="Dalin E."/>
            <person name="Tice H."/>
            <person name="Pitluck S."/>
            <person name="Chain P."/>
            <person name="Malfatti S."/>
            <person name="Shin M."/>
            <person name="Vergez L."/>
            <person name="Schmutz J."/>
            <person name="Larimer F."/>
            <person name="Land M."/>
            <person name="Hauser L."/>
            <person name="Kyrpides N."/>
            <person name="Kim E."/>
            <person name="Tiedje J."/>
            <person name="Richardson P."/>
        </authorList>
    </citation>
    <scope>NUCLEOTIDE SEQUENCE [LARGE SCALE GENOMIC DNA]</scope>
    <source>
        <strain>PRwf-1</strain>
    </source>
</reference>
<evidence type="ECO:0000255" key="1">
    <source>
        <dbReference type="HAMAP-Rule" id="MF_01026"/>
    </source>
</evidence>
<dbReference type="EC" id="4.2.1.33" evidence="1"/>
<dbReference type="EMBL" id="CP000713">
    <property type="protein sequence ID" value="ABQ94876.1"/>
    <property type="molecule type" value="Genomic_DNA"/>
</dbReference>
<dbReference type="SMR" id="A5WGT5"/>
<dbReference type="STRING" id="349106.PsycPRwf_1936"/>
<dbReference type="KEGG" id="prw:PsycPRwf_1936"/>
<dbReference type="eggNOG" id="COG0065">
    <property type="taxonomic scope" value="Bacteria"/>
</dbReference>
<dbReference type="HOGENOM" id="CLU_006714_3_4_6"/>
<dbReference type="UniPathway" id="UPA00048">
    <property type="reaction ID" value="UER00071"/>
</dbReference>
<dbReference type="GO" id="GO:0003861">
    <property type="term" value="F:3-isopropylmalate dehydratase activity"/>
    <property type="evidence" value="ECO:0007669"/>
    <property type="project" value="UniProtKB-UniRule"/>
</dbReference>
<dbReference type="GO" id="GO:0051539">
    <property type="term" value="F:4 iron, 4 sulfur cluster binding"/>
    <property type="evidence" value="ECO:0007669"/>
    <property type="project" value="UniProtKB-KW"/>
</dbReference>
<dbReference type="GO" id="GO:0046872">
    <property type="term" value="F:metal ion binding"/>
    <property type="evidence" value="ECO:0007669"/>
    <property type="project" value="UniProtKB-KW"/>
</dbReference>
<dbReference type="GO" id="GO:0009098">
    <property type="term" value="P:L-leucine biosynthetic process"/>
    <property type="evidence" value="ECO:0007669"/>
    <property type="project" value="UniProtKB-UniRule"/>
</dbReference>
<dbReference type="CDD" id="cd01583">
    <property type="entry name" value="IPMI"/>
    <property type="match status" value="1"/>
</dbReference>
<dbReference type="FunFam" id="3.30.499.10:FF:000007">
    <property type="entry name" value="3-isopropylmalate dehydratase large subunit"/>
    <property type="match status" value="1"/>
</dbReference>
<dbReference type="Gene3D" id="3.30.499.10">
    <property type="entry name" value="Aconitase, domain 3"/>
    <property type="match status" value="2"/>
</dbReference>
<dbReference type="HAMAP" id="MF_01026">
    <property type="entry name" value="LeuC_type1"/>
    <property type="match status" value="1"/>
</dbReference>
<dbReference type="InterPro" id="IPR004430">
    <property type="entry name" value="3-IsopropMal_deHydase_lsu"/>
</dbReference>
<dbReference type="InterPro" id="IPR015931">
    <property type="entry name" value="Acnase/IPM_dHydase_lsu_aba_1/3"/>
</dbReference>
<dbReference type="InterPro" id="IPR001030">
    <property type="entry name" value="Acoase/IPM_deHydtase_lsu_aba"/>
</dbReference>
<dbReference type="InterPro" id="IPR018136">
    <property type="entry name" value="Aconitase_4Fe-4S_BS"/>
</dbReference>
<dbReference type="InterPro" id="IPR036008">
    <property type="entry name" value="Aconitase_4Fe-4S_dom"/>
</dbReference>
<dbReference type="InterPro" id="IPR050067">
    <property type="entry name" value="IPM_dehydratase_rel_enz"/>
</dbReference>
<dbReference type="InterPro" id="IPR033941">
    <property type="entry name" value="IPMI_cat"/>
</dbReference>
<dbReference type="NCBIfam" id="TIGR00170">
    <property type="entry name" value="leuC"/>
    <property type="match status" value="1"/>
</dbReference>
<dbReference type="NCBIfam" id="NF004016">
    <property type="entry name" value="PRK05478.1"/>
    <property type="match status" value="1"/>
</dbReference>
<dbReference type="NCBIfam" id="NF009116">
    <property type="entry name" value="PRK12466.1"/>
    <property type="match status" value="1"/>
</dbReference>
<dbReference type="PANTHER" id="PTHR43822:SF9">
    <property type="entry name" value="3-ISOPROPYLMALATE DEHYDRATASE"/>
    <property type="match status" value="1"/>
</dbReference>
<dbReference type="PANTHER" id="PTHR43822">
    <property type="entry name" value="HOMOACONITASE, MITOCHONDRIAL-RELATED"/>
    <property type="match status" value="1"/>
</dbReference>
<dbReference type="Pfam" id="PF00330">
    <property type="entry name" value="Aconitase"/>
    <property type="match status" value="1"/>
</dbReference>
<dbReference type="PRINTS" id="PR00415">
    <property type="entry name" value="ACONITASE"/>
</dbReference>
<dbReference type="SUPFAM" id="SSF53732">
    <property type="entry name" value="Aconitase iron-sulfur domain"/>
    <property type="match status" value="1"/>
</dbReference>
<dbReference type="PROSITE" id="PS00450">
    <property type="entry name" value="ACONITASE_1"/>
    <property type="match status" value="1"/>
</dbReference>
<dbReference type="PROSITE" id="PS01244">
    <property type="entry name" value="ACONITASE_2"/>
    <property type="match status" value="1"/>
</dbReference>
<gene>
    <name evidence="1" type="primary">leuC</name>
    <name type="ordered locus">PsycPRwf_1936</name>
</gene>
<feature type="chain" id="PRO_0000319827" description="3-isopropylmalate dehydratase large subunit">
    <location>
        <begin position="1"/>
        <end position="478"/>
    </location>
</feature>
<feature type="binding site" evidence="1">
    <location>
        <position position="359"/>
    </location>
    <ligand>
        <name>[4Fe-4S] cluster</name>
        <dbReference type="ChEBI" id="CHEBI:49883"/>
    </ligand>
</feature>
<feature type="binding site" evidence="1">
    <location>
        <position position="420"/>
    </location>
    <ligand>
        <name>[4Fe-4S] cluster</name>
        <dbReference type="ChEBI" id="CHEBI:49883"/>
    </ligand>
</feature>
<feature type="binding site" evidence="1">
    <location>
        <position position="423"/>
    </location>
    <ligand>
        <name>[4Fe-4S] cluster</name>
        <dbReference type="ChEBI" id="CHEBI:49883"/>
    </ligand>
</feature>
<sequence length="478" mass="51674">MSAITITTAKTLYDKLWDAHLVSQRDDGSSLIYIDRHLLHEVTSPQAFEGLALANREPWRLSANIATPDHNVPTVRKERLEGVSGIKDEVSRLQVKTLDDNCVKFNIAEFTINDVRQGIVHVVGPEQGLVLPGMTVVCGDSHTATHGALGCLAHGIGTSEVEHVLATQCLVQKKSKNMLIRVNGELGAGVTAKDVVLAIIAKIGTAGGTGYAIEFAGEVFENMSMEGRMTVCNMAIEAGARVGMVGVDETTIEYVKGRPFAPTGEQWDQAVEYWNTLHSDEGAHFDAIVELDASDIAPQVSWGTSPEMVVDVTQYVPTLAQAKDEVQAEAWERAYQYMGLEQGQPITDIKLDRIFIGSCTNSRIEDLRSAASVIKGRKVAANVKEAIVVAGSGQVKQQAEQEGLDKLFIEAGFEWREPGCSMCLAMNADKLEPQEHCASTSNRNFEGRQGNGGRTHLVSPAMAAAAALAGHFVDVRSF</sequence>
<name>LEUC_PSYWF</name>
<protein>
    <recommendedName>
        <fullName evidence="1">3-isopropylmalate dehydratase large subunit</fullName>
        <ecNumber evidence="1">4.2.1.33</ecNumber>
    </recommendedName>
    <alternativeName>
        <fullName evidence="1">Alpha-IPM isomerase</fullName>
        <shortName evidence="1">IPMI</shortName>
    </alternativeName>
    <alternativeName>
        <fullName evidence="1">Isopropylmalate isomerase</fullName>
    </alternativeName>
</protein>